<comment type="function">
    <text evidence="7">Acetylxylan esterase involved in the hydrolysis of xylan, a major structural heterogeneous polysaccharide found in plant biomass representing the second most abundant polysaccharide in the biosphere, after cellulose. Degrades acetylated xylans by cleaving acetyl side groups from the hetero-xylan backbone.</text>
</comment>
<comment type="catalytic activity">
    <reaction evidence="7">
        <text>Deacetylation of xylans and xylo-oligosaccharides.</text>
        <dbReference type="EC" id="3.1.1.72"/>
    </reaction>
</comment>
<comment type="biophysicochemical properties">
    <kinetics>
        <KM evidence="7">4.3 mM for 4-nitrophanyl acetate</KM>
        <KM evidence="7">0.11 mM for 4-nitrophanyl butyrate</KM>
        <Vmax evidence="7">2.15 umol/min/mg enzyme 4-nitrophanyl acetate</Vmax>
        <Vmax evidence="7">0.78 umol/min/mg enzyme 4-nitrophanyl butyrate</Vmax>
    </kinetics>
    <phDependence>
        <text evidence="7">Optimum pH is 8.</text>
    </phDependence>
    <temperatureDependence>
        <text evidence="7">Optimum temperature is 40 degrees Celsius.</text>
    </temperatureDependence>
</comment>
<comment type="pathway">
    <text evidence="10">Glycan degradation; xylan degradation.</text>
</comment>
<comment type="subunit">
    <text evidence="1">Monomer.</text>
</comment>
<comment type="subcellular location">
    <subcellularLocation>
        <location evidence="10">Secreted</location>
    </subcellularLocation>
</comment>
<comment type="domain">
    <text evidence="9">Has a modular structure: a carbohydrate-binding module (CBM) at the N-terminus, a linker rich in serines, threonines, and prolines, and a C-terminal carbohydrate esterase catalytic module. The genes for catalytic modules and CBMs seem to have evolved separately and have been linked by gene fusion.</text>
</comment>
<comment type="PTM">
    <text evidence="7">Glycosylated.</text>
</comment>
<comment type="similarity">
    <text evidence="9">Belongs to the carbohydrate esterase 1 (CE1) family. AxeA subfamily.</text>
</comment>
<evidence type="ECO:0000250" key="1"/>
<evidence type="ECO:0000250" key="2">
    <source>
        <dbReference type="UniProtKB" id="Q4WBW4"/>
    </source>
</evidence>
<evidence type="ECO:0000255" key="3"/>
<evidence type="ECO:0000255" key="4">
    <source>
        <dbReference type="PROSITE-ProRule" id="PRU00498"/>
    </source>
</evidence>
<evidence type="ECO:0000255" key="5">
    <source>
        <dbReference type="PROSITE-ProRule" id="PRU00597"/>
    </source>
</evidence>
<evidence type="ECO:0000256" key="6">
    <source>
        <dbReference type="SAM" id="MobiDB-lite"/>
    </source>
</evidence>
<evidence type="ECO:0000269" key="7">
    <source>
    </source>
</evidence>
<evidence type="ECO:0000303" key="8">
    <source>
    </source>
</evidence>
<evidence type="ECO:0000305" key="9"/>
<evidence type="ECO:0000305" key="10">
    <source>
    </source>
</evidence>
<gene>
    <name type="ORF">CC1G_12850</name>
</gene>
<protein>
    <recommendedName>
        <fullName evidence="8">Acetylxylan esterase</fullName>
        <shortName evidence="8">AXE</shortName>
        <ecNumber evidence="7">3.1.1.72</ecNumber>
    </recommendedName>
</protein>
<sequence>MVFSPRLSAFVALVALTNAATAVPMYGQCGGSGYTGPTQCDPGLVCVKLNDWYSQCQSGGAQPPVTTTSSPPVTVSPPPSTTTVAPPVATGPPAPEIPAGQLTQLRSFGNNPSNISMFVYKPQNVKNRPGLLVALHPCGGTAQQYFSGFPGFRQHADQRGFIVLYGQSPPGSSNCWDIISTASLTREGGDDSTGIASAVKYALQNWNVDPEKVFVTGTSSGAMMTNIMAATYPDLFKAGAVWAGTAVGCLSANTPQFPPDPCQSGTVIRTPQEWGDRVRRAYPGYNGPWPRMQIWHGTNDFALDHKNLAEQMKQWTNVHNISQTPTSTSPSTPRQGWTKQVYGNGLVETFSGQGAGHGLPESGTEVVAMDFFGL</sequence>
<name>AXE1_COPC7</name>
<proteinExistence type="evidence at protein level"/>
<accession>A8PB24</accession>
<keyword id="KW-0119">Carbohydrate metabolism</keyword>
<keyword id="KW-0136">Cellulose degradation</keyword>
<keyword id="KW-0325">Glycoprotein</keyword>
<keyword id="KW-0378">Hydrolase</keyword>
<keyword id="KW-0624">Polysaccharide degradation</keyword>
<keyword id="KW-1185">Reference proteome</keyword>
<keyword id="KW-0964">Secreted</keyword>
<keyword id="KW-0719">Serine esterase</keyword>
<keyword id="KW-0732">Signal</keyword>
<feature type="signal peptide" evidence="3">
    <location>
        <begin position="1"/>
        <end position="22"/>
    </location>
</feature>
<feature type="chain" id="PRO_0000433970" description="Acetylxylan esterase">
    <location>
        <begin position="23"/>
        <end position="374"/>
    </location>
</feature>
<feature type="domain" description="CBM1" evidence="5">
    <location>
        <begin position="23"/>
        <end position="57"/>
    </location>
</feature>
<feature type="region of interest" description="Ser/Thr/Pro-rich linker" evidence="9">
    <location>
        <begin position="58"/>
        <end position="99"/>
    </location>
</feature>
<feature type="region of interest" description="Disordered" evidence="6">
    <location>
        <begin position="60"/>
        <end position="86"/>
    </location>
</feature>
<feature type="region of interest" description="Catalytic" evidence="2">
    <location>
        <begin position="100"/>
        <end position="374"/>
    </location>
</feature>
<feature type="compositionally biased region" description="Low complexity" evidence="6">
    <location>
        <begin position="63"/>
        <end position="73"/>
    </location>
</feature>
<feature type="active site" description="Charge relay system" evidence="1">
    <location>
        <position position="219"/>
    </location>
</feature>
<feature type="glycosylation site" description="N-linked (GlcNAc...) asparagine" evidence="4">
    <location>
        <position position="114"/>
    </location>
</feature>
<feature type="glycosylation site" description="N-linked (GlcNAc...) asparagine" evidence="4">
    <location>
        <position position="320"/>
    </location>
</feature>
<reference key="1">
    <citation type="journal article" date="2010" name="Proc. Natl. Acad. Sci. U.S.A.">
        <title>Insights into evolution of multicellular fungi from the assembled chromosomes of the mushroom Coprinopsis cinerea (Coprinus cinereus).</title>
        <authorList>
            <person name="Stajich J.E."/>
            <person name="Wilke S.K."/>
            <person name="Ahren D."/>
            <person name="Au C.H."/>
            <person name="Birren B.W."/>
            <person name="Borodovsky M."/>
            <person name="Burns C."/>
            <person name="Canbaeck B."/>
            <person name="Casselton L.A."/>
            <person name="Cheng C.K."/>
            <person name="Deng J."/>
            <person name="Dietrich F.S."/>
            <person name="Fargo D.C."/>
            <person name="Farman M.L."/>
            <person name="Gathman A.C."/>
            <person name="Goldberg J."/>
            <person name="Guigo R."/>
            <person name="Hoegger P.J."/>
            <person name="Hooker J.B."/>
            <person name="Huggins A."/>
            <person name="James T.Y."/>
            <person name="Kamada T."/>
            <person name="Kilaru S."/>
            <person name="Kodira C."/>
            <person name="Kuees U."/>
            <person name="Kupfer D."/>
            <person name="Kwan H.S."/>
            <person name="Lomsadze A."/>
            <person name="Li W."/>
            <person name="Lilly W.W."/>
            <person name="Ma L.-J."/>
            <person name="Mackey A.J."/>
            <person name="Manning G."/>
            <person name="Martin F."/>
            <person name="Muraguchi H."/>
            <person name="Natvig D.O."/>
            <person name="Palmerini H."/>
            <person name="Ramesh M.A."/>
            <person name="Rehmeyer C.J."/>
            <person name="Roe B.A."/>
            <person name="Shenoy N."/>
            <person name="Stanke M."/>
            <person name="Ter-Hovhannisyan V."/>
            <person name="Tunlid A."/>
            <person name="Velagapudi R."/>
            <person name="Vision T.J."/>
            <person name="Zeng Q."/>
            <person name="Zolan M.E."/>
            <person name="Pukkila P.J."/>
        </authorList>
    </citation>
    <scope>NUCLEOTIDE SEQUENCE [LARGE SCALE GENOMIC DNA]</scope>
    <source>
        <strain>Okayama-7 / 130 / ATCC MYA-4618 / FGSC 9003</strain>
    </source>
</reference>
<reference key="2">
    <citation type="journal article" date="2013" name="World J. Microbiol. Biotechnol.">
        <title>Heterologous expression and biochemical characterization of acetyl xylan esterase from Coprinopsis cinerea.</title>
        <authorList>
            <person name="Juturu V."/>
            <person name="Aust C."/>
            <person name="Wu J.C."/>
        </authorList>
    </citation>
    <scope>FUNCTION</scope>
    <scope>CATALYTIC ACTIVITY</scope>
    <scope>BIOPHYSICOCHEMICAL PROPERTIES</scope>
    <scope>PATHWAY</scope>
    <scope>GLYCOSYLATION</scope>
    <source>
        <strain>Okayama-7 / 130 / ATCC MYA-4618 / FGSC 9003</strain>
    </source>
</reference>
<organism>
    <name type="scientific">Coprinopsis cinerea (strain Okayama-7 / 130 / ATCC MYA-4618 / FGSC 9003)</name>
    <name type="common">Inky cap fungus</name>
    <name type="synonym">Hormographiella aspergillata</name>
    <dbReference type="NCBI Taxonomy" id="240176"/>
    <lineage>
        <taxon>Eukaryota</taxon>
        <taxon>Fungi</taxon>
        <taxon>Dikarya</taxon>
        <taxon>Basidiomycota</taxon>
        <taxon>Agaricomycotina</taxon>
        <taxon>Agaricomycetes</taxon>
        <taxon>Agaricomycetidae</taxon>
        <taxon>Agaricales</taxon>
        <taxon>Agaricineae</taxon>
        <taxon>Psathyrellaceae</taxon>
        <taxon>Coprinopsis</taxon>
    </lineage>
</organism>
<dbReference type="EC" id="3.1.1.72" evidence="7"/>
<dbReference type="EMBL" id="AACS02000004">
    <property type="protein sequence ID" value="EAU81722.1"/>
    <property type="molecule type" value="Genomic_DNA"/>
</dbReference>
<dbReference type="RefSeq" id="XP_001840093.1">
    <property type="nucleotide sequence ID" value="XM_001840041.1"/>
</dbReference>
<dbReference type="SMR" id="A8PB24"/>
<dbReference type="ESTHER" id="copc7-axe1">
    <property type="family name" value="Esterase_phb"/>
</dbReference>
<dbReference type="GeneID" id="6016718"/>
<dbReference type="KEGG" id="cci:CC1G_12850"/>
<dbReference type="VEuPathDB" id="FungiDB:CC1G_12850"/>
<dbReference type="eggNOG" id="ENOG502QTDU">
    <property type="taxonomic scope" value="Eukaryota"/>
</dbReference>
<dbReference type="InParanoid" id="A8PB24"/>
<dbReference type="OMA" id="NESIKEW"/>
<dbReference type="OrthoDB" id="2425929at2759"/>
<dbReference type="UniPathway" id="UPA00114"/>
<dbReference type="Proteomes" id="UP000001861">
    <property type="component" value="Unassembled WGS sequence"/>
</dbReference>
<dbReference type="GO" id="GO:0005576">
    <property type="term" value="C:extracellular region"/>
    <property type="evidence" value="ECO:0007669"/>
    <property type="project" value="UniProtKB-SubCell"/>
</dbReference>
<dbReference type="GO" id="GO:0046555">
    <property type="term" value="F:acetylxylan esterase activity"/>
    <property type="evidence" value="ECO:0007669"/>
    <property type="project" value="UniProtKB-EC"/>
</dbReference>
<dbReference type="GO" id="GO:0030248">
    <property type="term" value="F:cellulose binding"/>
    <property type="evidence" value="ECO:0007669"/>
    <property type="project" value="InterPro"/>
</dbReference>
<dbReference type="GO" id="GO:0030245">
    <property type="term" value="P:cellulose catabolic process"/>
    <property type="evidence" value="ECO:0007669"/>
    <property type="project" value="UniProtKB-KW"/>
</dbReference>
<dbReference type="GO" id="GO:0045493">
    <property type="term" value="P:xylan catabolic process"/>
    <property type="evidence" value="ECO:0007669"/>
    <property type="project" value="UniProtKB-UniPathway"/>
</dbReference>
<dbReference type="Gene3D" id="3.40.50.1820">
    <property type="entry name" value="alpha/beta hydrolase"/>
    <property type="match status" value="1"/>
</dbReference>
<dbReference type="InterPro" id="IPR029058">
    <property type="entry name" value="AB_hydrolase_fold"/>
</dbReference>
<dbReference type="InterPro" id="IPR035971">
    <property type="entry name" value="CBD_sf"/>
</dbReference>
<dbReference type="InterPro" id="IPR000254">
    <property type="entry name" value="Cellulose-bd_dom_fun"/>
</dbReference>
<dbReference type="InterPro" id="IPR010126">
    <property type="entry name" value="Esterase_phb"/>
</dbReference>
<dbReference type="InterPro" id="IPR050955">
    <property type="entry name" value="Plant_Biomass_Hydrol_Est"/>
</dbReference>
<dbReference type="NCBIfam" id="TIGR01840">
    <property type="entry name" value="esterase_phb"/>
    <property type="match status" value="1"/>
</dbReference>
<dbReference type="PANTHER" id="PTHR43037:SF5">
    <property type="entry name" value="FERULOYL ESTERASE"/>
    <property type="match status" value="1"/>
</dbReference>
<dbReference type="PANTHER" id="PTHR43037">
    <property type="entry name" value="UNNAMED PRODUCT-RELATED"/>
    <property type="match status" value="1"/>
</dbReference>
<dbReference type="Pfam" id="PF00734">
    <property type="entry name" value="CBM_1"/>
    <property type="match status" value="1"/>
</dbReference>
<dbReference type="Pfam" id="PF10503">
    <property type="entry name" value="Esterase_PHB"/>
    <property type="match status" value="1"/>
</dbReference>
<dbReference type="SMART" id="SM00236">
    <property type="entry name" value="fCBD"/>
    <property type="match status" value="1"/>
</dbReference>
<dbReference type="SUPFAM" id="SSF53474">
    <property type="entry name" value="alpha/beta-Hydrolases"/>
    <property type="match status" value="2"/>
</dbReference>
<dbReference type="SUPFAM" id="SSF57180">
    <property type="entry name" value="Cellulose-binding domain"/>
    <property type="match status" value="1"/>
</dbReference>
<dbReference type="PROSITE" id="PS00562">
    <property type="entry name" value="CBM1_1"/>
    <property type="match status" value="1"/>
</dbReference>
<dbReference type="PROSITE" id="PS51164">
    <property type="entry name" value="CBM1_2"/>
    <property type="match status" value="1"/>
</dbReference>